<accession>A4ISE0</accession>
<reference key="1">
    <citation type="journal article" date="2007" name="Proc. Natl. Acad. Sci. U.S.A.">
        <title>Genome and proteome of long-chain alkane degrading Geobacillus thermodenitrificans NG80-2 isolated from a deep-subsurface oil reservoir.</title>
        <authorList>
            <person name="Feng L."/>
            <person name="Wang W."/>
            <person name="Cheng J."/>
            <person name="Ren Y."/>
            <person name="Zhao G."/>
            <person name="Gao C."/>
            <person name="Tang Y."/>
            <person name="Liu X."/>
            <person name="Han W."/>
            <person name="Peng X."/>
            <person name="Liu R."/>
            <person name="Wang L."/>
        </authorList>
    </citation>
    <scope>NUCLEOTIDE SEQUENCE [LARGE SCALE GENOMIC DNA]</scope>
    <source>
        <strain>NG80-2</strain>
    </source>
</reference>
<protein>
    <recommendedName>
        <fullName evidence="1">Probable cytosol aminopeptidase</fullName>
        <ecNumber evidence="1">3.4.11.1</ecNumber>
    </recommendedName>
    <alternativeName>
        <fullName evidence="1">Leucine aminopeptidase</fullName>
        <shortName evidence="1">LAP</shortName>
        <ecNumber evidence="1">3.4.11.10</ecNumber>
    </alternativeName>
    <alternativeName>
        <fullName evidence="1">Leucyl aminopeptidase</fullName>
    </alternativeName>
</protein>
<evidence type="ECO:0000255" key="1">
    <source>
        <dbReference type="HAMAP-Rule" id="MF_00181"/>
    </source>
</evidence>
<comment type="function">
    <text evidence="1">Presumably involved in the processing and regular turnover of intracellular proteins. Catalyzes the removal of unsubstituted N-terminal amino acids from various peptides.</text>
</comment>
<comment type="catalytic activity">
    <reaction evidence="1">
        <text>Release of an N-terminal amino acid, Xaa-|-Yaa-, in which Xaa is preferably Leu, but may be other amino acids including Pro although not Arg or Lys, and Yaa may be Pro. Amino acid amides and methyl esters are also readily hydrolyzed, but rates on arylamides are exceedingly low.</text>
        <dbReference type="EC" id="3.4.11.1"/>
    </reaction>
</comment>
<comment type="catalytic activity">
    <reaction evidence="1">
        <text>Release of an N-terminal amino acid, preferentially leucine, but not glutamic or aspartic acids.</text>
        <dbReference type="EC" id="3.4.11.10"/>
    </reaction>
</comment>
<comment type="cofactor">
    <cofactor evidence="1">
        <name>Mn(2+)</name>
        <dbReference type="ChEBI" id="CHEBI:29035"/>
    </cofactor>
    <text evidence="1">Binds 2 manganese ions per subunit.</text>
</comment>
<comment type="subcellular location">
    <subcellularLocation>
        <location evidence="1">Cytoplasm</location>
    </subcellularLocation>
</comment>
<comment type="similarity">
    <text evidence="1">Belongs to the peptidase M17 family.</text>
</comment>
<sequence>MFTVKPWSSAEVVHEALAIGLFEGKDSWSGLAGEYDSRLGGQLSNLRKEGDISAKRGRIATIHTMLPTGVKRLYFVGLGKKEELTFERLREVFGKLFRTWKQAKRTEAAIALDTFTTETVDSNEAAHALAEAYYLATYEFPGYKQKKSEPDYALESLTVYTAADAAEIEASLFVGSVYGKATNSARTLVNTPGNLLTASDLADYAVELAKRYDFDYEILEKEEMERLGMGALLAVNQGSKQPPKLIVLKYQGKEQWENVIGLVGKGVTFDTGGYCLKPRDSMIDMKTDMGGAAAVLGAMEAIGELRPEQNVLAVIPATDNMISAEAFKPDDVITSLSGKTIEVRNTDAEGRLILADAITYAKQHGARYLIDVATLTGGVIVALGTDKTGAMTNNEALFEQLLEASMETGEFIWRLPITEKDRERVRSSKIADLNNSPGREGHAIMGGAFIGEFAEDTPWVHLDIAGTATTKKDGDLGPAGATGVMVRTLTAFVERFE</sequence>
<name>AMPA_GEOTN</name>
<proteinExistence type="inferred from homology"/>
<gene>
    <name evidence="1" type="primary">pepA</name>
    <name type="ordered locus">GTNG_2899</name>
</gene>
<feature type="chain" id="PRO_1000203830" description="Probable cytosol aminopeptidase">
    <location>
        <begin position="1"/>
        <end position="497"/>
    </location>
</feature>
<feature type="active site" evidence="1">
    <location>
        <position position="277"/>
    </location>
</feature>
<feature type="active site" evidence="1">
    <location>
        <position position="351"/>
    </location>
</feature>
<feature type="binding site" evidence="1">
    <location>
        <position position="265"/>
    </location>
    <ligand>
        <name>Mn(2+)</name>
        <dbReference type="ChEBI" id="CHEBI:29035"/>
        <label>2</label>
    </ligand>
</feature>
<feature type="binding site" evidence="1">
    <location>
        <position position="270"/>
    </location>
    <ligand>
        <name>Mn(2+)</name>
        <dbReference type="ChEBI" id="CHEBI:29035"/>
        <label>1</label>
    </ligand>
</feature>
<feature type="binding site" evidence="1">
    <location>
        <position position="270"/>
    </location>
    <ligand>
        <name>Mn(2+)</name>
        <dbReference type="ChEBI" id="CHEBI:29035"/>
        <label>2</label>
    </ligand>
</feature>
<feature type="binding site" evidence="1">
    <location>
        <position position="288"/>
    </location>
    <ligand>
        <name>Mn(2+)</name>
        <dbReference type="ChEBI" id="CHEBI:29035"/>
        <label>2</label>
    </ligand>
</feature>
<feature type="binding site" evidence="1">
    <location>
        <position position="347"/>
    </location>
    <ligand>
        <name>Mn(2+)</name>
        <dbReference type="ChEBI" id="CHEBI:29035"/>
        <label>1</label>
    </ligand>
</feature>
<feature type="binding site" evidence="1">
    <location>
        <position position="349"/>
    </location>
    <ligand>
        <name>Mn(2+)</name>
        <dbReference type="ChEBI" id="CHEBI:29035"/>
        <label>1</label>
    </ligand>
</feature>
<feature type="binding site" evidence="1">
    <location>
        <position position="349"/>
    </location>
    <ligand>
        <name>Mn(2+)</name>
        <dbReference type="ChEBI" id="CHEBI:29035"/>
        <label>2</label>
    </ligand>
</feature>
<keyword id="KW-0031">Aminopeptidase</keyword>
<keyword id="KW-0963">Cytoplasm</keyword>
<keyword id="KW-0378">Hydrolase</keyword>
<keyword id="KW-0464">Manganese</keyword>
<keyword id="KW-0479">Metal-binding</keyword>
<keyword id="KW-0645">Protease</keyword>
<dbReference type="EC" id="3.4.11.1" evidence="1"/>
<dbReference type="EC" id="3.4.11.10" evidence="1"/>
<dbReference type="EMBL" id="CP000557">
    <property type="protein sequence ID" value="ABO68244.1"/>
    <property type="molecule type" value="Genomic_DNA"/>
</dbReference>
<dbReference type="RefSeq" id="WP_011888112.1">
    <property type="nucleotide sequence ID" value="NC_009328.1"/>
</dbReference>
<dbReference type="SMR" id="A4ISE0"/>
<dbReference type="MEROPS" id="M17.010"/>
<dbReference type="KEGG" id="gtn:GTNG_2899"/>
<dbReference type="eggNOG" id="COG0260">
    <property type="taxonomic scope" value="Bacteria"/>
</dbReference>
<dbReference type="HOGENOM" id="CLU_013734_6_0_9"/>
<dbReference type="Proteomes" id="UP000001578">
    <property type="component" value="Chromosome"/>
</dbReference>
<dbReference type="GO" id="GO:0005737">
    <property type="term" value="C:cytoplasm"/>
    <property type="evidence" value="ECO:0007669"/>
    <property type="project" value="UniProtKB-SubCell"/>
</dbReference>
<dbReference type="GO" id="GO:0030145">
    <property type="term" value="F:manganese ion binding"/>
    <property type="evidence" value="ECO:0007669"/>
    <property type="project" value="UniProtKB-UniRule"/>
</dbReference>
<dbReference type="GO" id="GO:0070006">
    <property type="term" value="F:metalloaminopeptidase activity"/>
    <property type="evidence" value="ECO:0007669"/>
    <property type="project" value="InterPro"/>
</dbReference>
<dbReference type="GO" id="GO:0006508">
    <property type="term" value="P:proteolysis"/>
    <property type="evidence" value="ECO:0007669"/>
    <property type="project" value="UniProtKB-KW"/>
</dbReference>
<dbReference type="CDD" id="cd00433">
    <property type="entry name" value="Peptidase_M17"/>
    <property type="match status" value="1"/>
</dbReference>
<dbReference type="Gene3D" id="3.40.220.10">
    <property type="entry name" value="Leucine Aminopeptidase, subunit E, domain 1"/>
    <property type="match status" value="1"/>
</dbReference>
<dbReference type="Gene3D" id="3.40.630.10">
    <property type="entry name" value="Zn peptidases"/>
    <property type="match status" value="1"/>
</dbReference>
<dbReference type="HAMAP" id="MF_00181">
    <property type="entry name" value="Cytosol_peptidase_M17"/>
    <property type="match status" value="1"/>
</dbReference>
<dbReference type="InterPro" id="IPR011356">
    <property type="entry name" value="Leucine_aapep/pepB"/>
</dbReference>
<dbReference type="InterPro" id="IPR043472">
    <property type="entry name" value="Macro_dom-like"/>
</dbReference>
<dbReference type="InterPro" id="IPR000819">
    <property type="entry name" value="Peptidase_M17_C"/>
</dbReference>
<dbReference type="InterPro" id="IPR023042">
    <property type="entry name" value="Peptidase_M17_leu_NH2_pept"/>
</dbReference>
<dbReference type="InterPro" id="IPR008283">
    <property type="entry name" value="Peptidase_M17_N"/>
</dbReference>
<dbReference type="NCBIfam" id="NF002073">
    <property type="entry name" value="PRK00913.1-2"/>
    <property type="match status" value="1"/>
</dbReference>
<dbReference type="NCBIfam" id="NF002074">
    <property type="entry name" value="PRK00913.1-4"/>
    <property type="match status" value="1"/>
</dbReference>
<dbReference type="NCBIfam" id="NF002083">
    <property type="entry name" value="PRK00913.3-5"/>
    <property type="match status" value="1"/>
</dbReference>
<dbReference type="PANTHER" id="PTHR11963:SF23">
    <property type="entry name" value="CYTOSOL AMINOPEPTIDASE"/>
    <property type="match status" value="1"/>
</dbReference>
<dbReference type="PANTHER" id="PTHR11963">
    <property type="entry name" value="LEUCINE AMINOPEPTIDASE-RELATED"/>
    <property type="match status" value="1"/>
</dbReference>
<dbReference type="Pfam" id="PF00883">
    <property type="entry name" value="Peptidase_M17"/>
    <property type="match status" value="1"/>
</dbReference>
<dbReference type="Pfam" id="PF02789">
    <property type="entry name" value="Peptidase_M17_N"/>
    <property type="match status" value="1"/>
</dbReference>
<dbReference type="PRINTS" id="PR00481">
    <property type="entry name" value="LAMNOPPTDASE"/>
</dbReference>
<dbReference type="SUPFAM" id="SSF52949">
    <property type="entry name" value="Macro domain-like"/>
    <property type="match status" value="1"/>
</dbReference>
<dbReference type="SUPFAM" id="SSF53187">
    <property type="entry name" value="Zn-dependent exopeptidases"/>
    <property type="match status" value="1"/>
</dbReference>
<dbReference type="PROSITE" id="PS00631">
    <property type="entry name" value="CYTOSOL_AP"/>
    <property type="match status" value="1"/>
</dbReference>
<organism>
    <name type="scientific">Geobacillus thermodenitrificans (strain NG80-2)</name>
    <dbReference type="NCBI Taxonomy" id="420246"/>
    <lineage>
        <taxon>Bacteria</taxon>
        <taxon>Bacillati</taxon>
        <taxon>Bacillota</taxon>
        <taxon>Bacilli</taxon>
        <taxon>Bacillales</taxon>
        <taxon>Anoxybacillaceae</taxon>
        <taxon>Geobacillus</taxon>
    </lineage>
</organism>